<gene>
    <name evidence="1" type="primary">hisD</name>
    <name type="ordered locus">GOX0991</name>
</gene>
<feature type="chain" id="PRO_0000135776" description="Histidinol dehydrogenase">
    <location>
        <begin position="1"/>
        <end position="430"/>
    </location>
</feature>
<feature type="active site" description="Proton acceptor" evidence="1">
    <location>
        <position position="326"/>
    </location>
</feature>
<feature type="active site" description="Proton acceptor" evidence="1">
    <location>
        <position position="327"/>
    </location>
</feature>
<feature type="binding site" evidence="1">
    <location>
        <position position="129"/>
    </location>
    <ligand>
        <name>NAD(+)</name>
        <dbReference type="ChEBI" id="CHEBI:57540"/>
    </ligand>
</feature>
<feature type="binding site" evidence="1">
    <location>
        <position position="190"/>
    </location>
    <ligand>
        <name>NAD(+)</name>
        <dbReference type="ChEBI" id="CHEBI:57540"/>
    </ligand>
</feature>
<feature type="binding site" evidence="1">
    <location>
        <position position="213"/>
    </location>
    <ligand>
        <name>NAD(+)</name>
        <dbReference type="ChEBI" id="CHEBI:57540"/>
    </ligand>
</feature>
<feature type="binding site" evidence="1">
    <location>
        <position position="236"/>
    </location>
    <ligand>
        <name>substrate</name>
    </ligand>
</feature>
<feature type="binding site" evidence="1">
    <location>
        <position position="258"/>
    </location>
    <ligand>
        <name>substrate</name>
    </ligand>
</feature>
<feature type="binding site" evidence="1">
    <location>
        <position position="258"/>
    </location>
    <ligand>
        <name>Zn(2+)</name>
        <dbReference type="ChEBI" id="CHEBI:29105"/>
    </ligand>
</feature>
<feature type="binding site" evidence="1">
    <location>
        <position position="261"/>
    </location>
    <ligand>
        <name>substrate</name>
    </ligand>
</feature>
<feature type="binding site" evidence="1">
    <location>
        <position position="261"/>
    </location>
    <ligand>
        <name>Zn(2+)</name>
        <dbReference type="ChEBI" id="CHEBI:29105"/>
    </ligand>
</feature>
<feature type="binding site" evidence="1">
    <location>
        <position position="327"/>
    </location>
    <ligand>
        <name>substrate</name>
    </ligand>
</feature>
<feature type="binding site" evidence="1">
    <location>
        <position position="360"/>
    </location>
    <ligand>
        <name>substrate</name>
    </ligand>
</feature>
<feature type="binding site" evidence="1">
    <location>
        <position position="360"/>
    </location>
    <ligand>
        <name>Zn(2+)</name>
        <dbReference type="ChEBI" id="CHEBI:29105"/>
    </ligand>
</feature>
<feature type="binding site" evidence="1">
    <location>
        <position position="414"/>
    </location>
    <ligand>
        <name>substrate</name>
    </ligand>
</feature>
<feature type="binding site" evidence="1">
    <location>
        <position position="419"/>
    </location>
    <ligand>
        <name>substrate</name>
    </ligand>
</feature>
<feature type="binding site" evidence="1">
    <location>
        <position position="419"/>
    </location>
    <ligand>
        <name>Zn(2+)</name>
        <dbReference type="ChEBI" id="CHEBI:29105"/>
    </ligand>
</feature>
<comment type="function">
    <text evidence="1">Catalyzes the sequential NAD-dependent oxidations of L-histidinol to L-histidinaldehyde and then to L-histidine.</text>
</comment>
<comment type="catalytic activity">
    <reaction evidence="1">
        <text>L-histidinol + 2 NAD(+) + H2O = L-histidine + 2 NADH + 3 H(+)</text>
        <dbReference type="Rhea" id="RHEA:20641"/>
        <dbReference type="ChEBI" id="CHEBI:15377"/>
        <dbReference type="ChEBI" id="CHEBI:15378"/>
        <dbReference type="ChEBI" id="CHEBI:57540"/>
        <dbReference type="ChEBI" id="CHEBI:57595"/>
        <dbReference type="ChEBI" id="CHEBI:57699"/>
        <dbReference type="ChEBI" id="CHEBI:57945"/>
        <dbReference type="EC" id="1.1.1.23"/>
    </reaction>
</comment>
<comment type="cofactor">
    <cofactor evidence="1">
        <name>Zn(2+)</name>
        <dbReference type="ChEBI" id="CHEBI:29105"/>
    </cofactor>
    <text evidence="1">Binds 1 zinc ion per subunit.</text>
</comment>
<comment type="pathway">
    <text evidence="1">Amino-acid biosynthesis; L-histidine biosynthesis; L-histidine from 5-phospho-alpha-D-ribose 1-diphosphate: step 9/9.</text>
</comment>
<comment type="similarity">
    <text evidence="1">Belongs to the histidinol dehydrogenase family.</text>
</comment>
<reference key="1">
    <citation type="journal article" date="2005" name="Nat. Biotechnol.">
        <title>Complete genome sequence of the acetic acid bacterium Gluconobacter oxydans.</title>
        <authorList>
            <person name="Prust C."/>
            <person name="Hoffmeister M."/>
            <person name="Liesegang H."/>
            <person name="Wiezer A."/>
            <person name="Fricke W.F."/>
            <person name="Ehrenreich A."/>
            <person name="Gottschalk G."/>
            <person name="Deppenmeier U."/>
        </authorList>
    </citation>
    <scope>NUCLEOTIDE SEQUENCE [LARGE SCALE GENOMIC DNA]</scope>
    <source>
        <strain>621H</strain>
    </source>
</reference>
<protein>
    <recommendedName>
        <fullName evidence="1">Histidinol dehydrogenase</fullName>
        <shortName evidence="1">HDH</shortName>
        <ecNumber evidence="1">1.1.1.23</ecNumber>
    </recommendedName>
</protein>
<dbReference type="EC" id="1.1.1.23" evidence="1"/>
<dbReference type="EMBL" id="CP000009">
    <property type="protein sequence ID" value="AAW60763.1"/>
    <property type="molecule type" value="Genomic_DNA"/>
</dbReference>
<dbReference type="RefSeq" id="WP_011252557.1">
    <property type="nucleotide sequence ID" value="NC_006677.1"/>
</dbReference>
<dbReference type="SMR" id="Q5FS83"/>
<dbReference type="STRING" id="290633.GOX0991"/>
<dbReference type="KEGG" id="gox:GOX0991"/>
<dbReference type="eggNOG" id="COG0141">
    <property type="taxonomic scope" value="Bacteria"/>
</dbReference>
<dbReference type="HOGENOM" id="CLU_006732_3_3_5"/>
<dbReference type="UniPathway" id="UPA00031">
    <property type="reaction ID" value="UER00014"/>
</dbReference>
<dbReference type="Proteomes" id="UP000006375">
    <property type="component" value="Chromosome"/>
</dbReference>
<dbReference type="GO" id="GO:0005829">
    <property type="term" value="C:cytosol"/>
    <property type="evidence" value="ECO:0007669"/>
    <property type="project" value="TreeGrafter"/>
</dbReference>
<dbReference type="GO" id="GO:0004399">
    <property type="term" value="F:histidinol dehydrogenase activity"/>
    <property type="evidence" value="ECO:0007669"/>
    <property type="project" value="UniProtKB-UniRule"/>
</dbReference>
<dbReference type="GO" id="GO:0051287">
    <property type="term" value="F:NAD binding"/>
    <property type="evidence" value="ECO:0007669"/>
    <property type="project" value="InterPro"/>
</dbReference>
<dbReference type="GO" id="GO:0008270">
    <property type="term" value="F:zinc ion binding"/>
    <property type="evidence" value="ECO:0007669"/>
    <property type="project" value="UniProtKB-UniRule"/>
</dbReference>
<dbReference type="GO" id="GO:0000105">
    <property type="term" value="P:L-histidine biosynthetic process"/>
    <property type="evidence" value="ECO:0007669"/>
    <property type="project" value="UniProtKB-UniRule"/>
</dbReference>
<dbReference type="CDD" id="cd06572">
    <property type="entry name" value="Histidinol_dh"/>
    <property type="match status" value="1"/>
</dbReference>
<dbReference type="FunFam" id="3.40.50.1980:FF:000001">
    <property type="entry name" value="Histidinol dehydrogenase"/>
    <property type="match status" value="1"/>
</dbReference>
<dbReference type="FunFam" id="3.40.50.1980:FF:000026">
    <property type="entry name" value="Histidinol dehydrogenase"/>
    <property type="match status" value="1"/>
</dbReference>
<dbReference type="Gene3D" id="1.20.5.1300">
    <property type="match status" value="1"/>
</dbReference>
<dbReference type="Gene3D" id="3.40.50.1980">
    <property type="entry name" value="Nitrogenase molybdenum iron protein domain"/>
    <property type="match status" value="2"/>
</dbReference>
<dbReference type="HAMAP" id="MF_01024">
    <property type="entry name" value="HisD"/>
    <property type="match status" value="1"/>
</dbReference>
<dbReference type="InterPro" id="IPR016161">
    <property type="entry name" value="Ald_DH/histidinol_DH"/>
</dbReference>
<dbReference type="InterPro" id="IPR001692">
    <property type="entry name" value="Histidinol_DH_CS"/>
</dbReference>
<dbReference type="InterPro" id="IPR022695">
    <property type="entry name" value="Histidinol_DH_monofunct"/>
</dbReference>
<dbReference type="InterPro" id="IPR012131">
    <property type="entry name" value="Hstdl_DH"/>
</dbReference>
<dbReference type="NCBIfam" id="TIGR00069">
    <property type="entry name" value="hisD"/>
    <property type="match status" value="1"/>
</dbReference>
<dbReference type="PANTHER" id="PTHR21256:SF2">
    <property type="entry name" value="HISTIDINE BIOSYNTHESIS TRIFUNCTIONAL PROTEIN"/>
    <property type="match status" value="1"/>
</dbReference>
<dbReference type="PANTHER" id="PTHR21256">
    <property type="entry name" value="HISTIDINOL DEHYDROGENASE HDH"/>
    <property type="match status" value="1"/>
</dbReference>
<dbReference type="Pfam" id="PF00815">
    <property type="entry name" value="Histidinol_dh"/>
    <property type="match status" value="1"/>
</dbReference>
<dbReference type="PIRSF" id="PIRSF000099">
    <property type="entry name" value="Histidinol_dh"/>
    <property type="match status" value="1"/>
</dbReference>
<dbReference type="PRINTS" id="PR00083">
    <property type="entry name" value="HOLDHDRGNASE"/>
</dbReference>
<dbReference type="SUPFAM" id="SSF53720">
    <property type="entry name" value="ALDH-like"/>
    <property type="match status" value="1"/>
</dbReference>
<dbReference type="PROSITE" id="PS00611">
    <property type="entry name" value="HISOL_DEHYDROGENASE"/>
    <property type="match status" value="1"/>
</dbReference>
<keyword id="KW-0028">Amino-acid biosynthesis</keyword>
<keyword id="KW-0368">Histidine biosynthesis</keyword>
<keyword id="KW-0479">Metal-binding</keyword>
<keyword id="KW-0520">NAD</keyword>
<keyword id="KW-0560">Oxidoreductase</keyword>
<keyword id="KW-1185">Reference proteome</keyword>
<keyword id="KW-0862">Zinc</keyword>
<proteinExistence type="inferred from homology"/>
<evidence type="ECO:0000255" key="1">
    <source>
        <dbReference type="HAMAP-Rule" id="MF_01024"/>
    </source>
</evidence>
<accession>Q5FS83</accession>
<name>HISX_GLUOX</name>
<organism>
    <name type="scientific">Gluconobacter oxydans (strain 621H)</name>
    <name type="common">Gluconobacter suboxydans</name>
    <dbReference type="NCBI Taxonomy" id="290633"/>
    <lineage>
        <taxon>Bacteria</taxon>
        <taxon>Pseudomonadati</taxon>
        <taxon>Pseudomonadota</taxon>
        <taxon>Alphaproteobacteria</taxon>
        <taxon>Acetobacterales</taxon>
        <taxon>Acetobacteraceae</taxon>
        <taxon>Gluconobacter</taxon>
    </lineage>
</organism>
<sequence length="430" mass="45736">MKRLDTSAAGFSEDFATLLAARGSDERSVAEPVRAILADVRSRGDEALCDYTARFDRLTLPAEKLRISAEEIASEAARVPADLMDALRTAARRIETFHAAQMPKDLDFTDEDGIRLGMRWTPLDAVGLYVPGGKAAYPSSVLMNALPARVAGVKRLAMCVPSPDGVLNPLVLAAAQLCGVEEIYRIGGAQAVGAMAFGTDLIAPVDRIVGPGNAYVAEAKRQVFGHVGIDSIAGPSEVVVVADGQNDPRLVALDLLAQAEHDEQAQAILITTDAAFAERAAEAVRKELETLPRTAIASKSWEDHGAIIVVRSLEEAAEIVNALAPEHLEVMLDAPRDFSAMIRHAGAIFMGRYCPEAVGDYVGGPNHVLPTSRTARFASGLSVFDFIKRTTTIEADEAGLRRIGPAGVALAKAEGLDAHALSLSVRLEKN</sequence>